<proteinExistence type="inferred from homology"/>
<protein>
    <recommendedName>
        <fullName evidence="8">Beta-glucosidase 47</fullName>
        <shortName evidence="8">AtBGLU47</shortName>
        <ecNumber evidence="1">3.2.1.21</ecNumber>
    </recommendedName>
</protein>
<reference key="1">
    <citation type="journal article" date="1999" name="Nature">
        <title>Sequence and analysis of chromosome 4 of the plant Arabidopsis thaliana.</title>
        <authorList>
            <person name="Mayer K.F.X."/>
            <person name="Schueller C."/>
            <person name="Wambutt R."/>
            <person name="Murphy G."/>
            <person name="Volckaert G."/>
            <person name="Pohl T."/>
            <person name="Duesterhoeft A."/>
            <person name="Stiekema W."/>
            <person name="Entian K.-D."/>
            <person name="Terryn N."/>
            <person name="Harris B."/>
            <person name="Ansorge W."/>
            <person name="Brandt P."/>
            <person name="Grivell L.A."/>
            <person name="Rieger M."/>
            <person name="Weichselgartner M."/>
            <person name="de Simone V."/>
            <person name="Obermaier B."/>
            <person name="Mache R."/>
            <person name="Mueller M."/>
            <person name="Kreis M."/>
            <person name="Delseny M."/>
            <person name="Puigdomenech P."/>
            <person name="Watson M."/>
            <person name="Schmidtheini T."/>
            <person name="Reichert B."/>
            <person name="Portetelle D."/>
            <person name="Perez-Alonso M."/>
            <person name="Boutry M."/>
            <person name="Bancroft I."/>
            <person name="Vos P."/>
            <person name="Hoheisel J."/>
            <person name="Zimmermann W."/>
            <person name="Wedler H."/>
            <person name="Ridley P."/>
            <person name="Langham S.-A."/>
            <person name="McCullagh B."/>
            <person name="Bilham L."/>
            <person name="Robben J."/>
            <person name="van der Schueren J."/>
            <person name="Grymonprez B."/>
            <person name="Chuang Y.-J."/>
            <person name="Vandenbussche F."/>
            <person name="Braeken M."/>
            <person name="Weltjens I."/>
            <person name="Voet M."/>
            <person name="Bastiaens I."/>
            <person name="Aert R."/>
            <person name="Defoor E."/>
            <person name="Weitzenegger T."/>
            <person name="Bothe G."/>
            <person name="Ramsperger U."/>
            <person name="Hilbert H."/>
            <person name="Braun M."/>
            <person name="Holzer E."/>
            <person name="Brandt A."/>
            <person name="Peters S."/>
            <person name="van Staveren M."/>
            <person name="Dirkse W."/>
            <person name="Mooijman P."/>
            <person name="Klein Lankhorst R."/>
            <person name="Rose M."/>
            <person name="Hauf J."/>
            <person name="Koetter P."/>
            <person name="Berneiser S."/>
            <person name="Hempel S."/>
            <person name="Feldpausch M."/>
            <person name="Lamberth S."/>
            <person name="Van den Daele H."/>
            <person name="De Keyser A."/>
            <person name="Buysshaert C."/>
            <person name="Gielen J."/>
            <person name="Villarroel R."/>
            <person name="De Clercq R."/>
            <person name="van Montagu M."/>
            <person name="Rogers J."/>
            <person name="Cronin A."/>
            <person name="Quail M.A."/>
            <person name="Bray-Allen S."/>
            <person name="Clark L."/>
            <person name="Doggett J."/>
            <person name="Hall S."/>
            <person name="Kay M."/>
            <person name="Lennard N."/>
            <person name="McLay K."/>
            <person name="Mayes R."/>
            <person name="Pettett A."/>
            <person name="Rajandream M.A."/>
            <person name="Lyne M."/>
            <person name="Benes V."/>
            <person name="Rechmann S."/>
            <person name="Borkova D."/>
            <person name="Bloecker H."/>
            <person name="Scharfe M."/>
            <person name="Grimm M."/>
            <person name="Loehnert T.-H."/>
            <person name="Dose S."/>
            <person name="de Haan M."/>
            <person name="Maarse A.C."/>
            <person name="Schaefer M."/>
            <person name="Mueller-Auer S."/>
            <person name="Gabel C."/>
            <person name="Fuchs M."/>
            <person name="Fartmann B."/>
            <person name="Granderath K."/>
            <person name="Dauner D."/>
            <person name="Herzl A."/>
            <person name="Neumann S."/>
            <person name="Argiriou A."/>
            <person name="Vitale D."/>
            <person name="Liguori R."/>
            <person name="Piravandi E."/>
            <person name="Massenet O."/>
            <person name="Quigley F."/>
            <person name="Clabauld G."/>
            <person name="Muendlein A."/>
            <person name="Felber R."/>
            <person name="Schnabl S."/>
            <person name="Hiller R."/>
            <person name="Schmidt W."/>
            <person name="Lecharny A."/>
            <person name="Aubourg S."/>
            <person name="Chefdor F."/>
            <person name="Cooke R."/>
            <person name="Berger C."/>
            <person name="Monfort A."/>
            <person name="Casacuberta E."/>
            <person name="Gibbons T."/>
            <person name="Weber N."/>
            <person name="Vandenbol M."/>
            <person name="Bargues M."/>
            <person name="Terol J."/>
            <person name="Torres A."/>
            <person name="Perez-Perez A."/>
            <person name="Purnelle B."/>
            <person name="Bent E."/>
            <person name="Johnson S."/>
            <person name="Tacon D."/>
            <person name="Jesse T."/>
            <person name="Heijnen L."/>
            <person name="Schwarz S."/>
            <person name="Scholler P."/>
            <person name="Heber S."/>
            <person name="Francs P."/>
            <person name="Bielke C."/>
            <person name="Frishman D."/>
            <person name="Haase D."/>
            <person name="Lemcke K."/>
            <person name="Mewes H.-W."/>
            <person name="Stocker S."/>
            <person name="Zaccaria P."/>
            <person name="Bevan M."/>
            <person name="Wilson R.K."/>
            <person name="de la Bastide M."/>
            <person name="Habermann K."/>
            <person name="Parnell L."/>
            <person name="Dedhia N."/>
            <person name="Gnoj L."/>
            <person name="Schutz K."/>
            <person name="Huang E."/>
            <person name="Spiegel L."/>
            <person name="Sekhon M."/>
            <person name="Murray J."/>
            <person name="Sheet P."/>
            <person name="Cordes M."/>
            <person name="Abu-Threideh J."/>
            <person name="Stoneking T."/>
            <person name="Kalicki J."/>
            <person name="Graves T."/>
            <person name="Harmon G."/>
            <person name="Edwards J."/>
            <person name="Latreille P."/>
            <person name="Courtney L."/>
            <person name="Cloud J."/>
            <person name="Abbott A."/>
            <person name="Scott K."/>
            <person name="Johnson D."/>
            <person name="Minx P."/>
            <person name="Bentley D."/>
            <person name="Fulton B."/>
            <person name="Miller N."/>
            <person name="Greco T."/>
            <person name="Kemp K."/>
            <person name="Kramer J."/>
            <person name="Fulton L."/>
            <person name="Mardis E."/>
            <person name="Dante M."/>
            <person name="Pepin K."/>
            <person name="Hillier L.W."/>
            <person name="Nelson J."/>
            <person name="Spieth J."/>
            <person name="Ryan E."/>
            <person name="Andrews S."/>
            <person name="Geisel C."/>
            <person name="Layman D."/>
            <person name="Du H."/>
            <person name="Ali J."/>
            <person name="Berghoff A."/>
            <person name="Jones K."/>
            <person name="Drone K."/>
            <person name="Cotton M."/>
            <person name="Joshu C."/>
            <person name="Antonoiu B."/>
            <person name="Zidanic M."/>
            <person name="Strong C."/>
            <person name="Sun H."/>
            <person name="Lamar B."/>
            <person name="Yordan C."/>
            <person name="Ma P."/>
            <person name="Zhong J."/>
            <person name="Preston R."/>
            <person name="Vil D."/>
            <person name="Shekher M."/>
            <person name="Matero A."/>
            <person name="Shah R."/>
            <person name="Swaby I.K."/>
            <person name="O'Shaughnessy A."/>
            <person name="Rodriguez M."/>
            <person name="Hoffman J."/>
            <person name="Till S."/>
            <person name="Granat S."/>
            <person name="Shohdy N."/>
            <person name="Hasegawa A."/>
            <person name="Hameed A."/>
            <person name="Lodhi M."/>
            <person name="Johnson A."/>
            <person name="Chen E."/>
            <person name="Marra M.A."/>
            <person name="Martienssen R."/>
            <person name="McCombie W.R."/>
        </authorList>
    </citation>
    <scope>NUCLEOTIDE SEQUENCE [LARGE SCALE GENOMIC DNA]</scope>
    <source>
        <strain>cv. Columbia</strain>
    </source>
</reference>
<reference key="2">
    <citation type="journal article" date="2017" name="Plant J.">
        <title>Araport11: a complete reannotation of the Arabidopsis thaliana reference genome.</title>
        <authorList>
            <person name="Cheng C.Y."/>
            <person name="Krishnakumar V."/>
            <person name="Chan A.P."/>
            <person name="Thibaud-Nissen F."/>
            <person name="Schobel S."/>
            <person name="Town C.D."/>
        </authorList>
    </citation>
    <scope>GENOME REANNOTATION</scope>
    <source>
        <strain>cv. Columbia</strain>
    </source>
</reference>
<reference key="3">
    <citation type="journal article" date="2004" name="Plant Mol. Biol.">
        <title>Functional genomic analysis of Arabidopsis thaliana glycoside hydrolase family 1.</title>
        <authorList>
            <person name="Xu Z."/>
            <person name="Escamilla-Trevino L.L."/>
            <person name="Zeng L."/>
            <person name="Lalgondar M."/>
            <person name="Bevan D.R."/>
            <person name="Winkel B.S.J."/>
            <person name="Mohamed A."/>
            <person name="Cheng C.-L."/>
            <person name="Shih M.-C."/>
            <person name="Poulton J.E."/>
            <person name="Esen A."/>
        </authorList>
    </citation>
    <scope>GENE FAMILY</scope>
    <scope>NOMENCLATURE</scope>
</reference>
<name>BGL47_ARATH</name>
<keyword id="KW-1015">Disulfide bond</keyword>
<keyword id="KW-0325">Glycoprotein</keyword>
<keyword id="KW-0326">Glycosidase</keyword>
<keyword id="KW-0378">Hydrolase</keyword>
<keyword id="KW-1185">Reference proteome</keyword>
<keyword id="KW-0732">Signal</keyword>
<comment type="catalytic activity">
    <reaction evidence="1">
        <text>Hydrolysis of terminal, non-reducing beta-D-glucosyl residues with release of beta-D-glucose.</text>
        <dbReference type="EC" id="3.2.1.21"/>
    </reaction>
</comment>
<comment type="similarity">
    <text evidence="9">Belongs to the glycosyl hydrolase 1 family.</text>
</comment>
<comment type="sequence caution" evidence="9">
    <conflict type="erroneous gene model prediction">
        <sequence resource="EMBL-CDS" id="CAB36820"/>
    </conflict>
</comment>
<comment type="sequence caution" evidence="9">
    <conflict type="erroneous gene model prediction">
        <sequence resource="EMBL-CDS" id="CAB81283"/>
    </conflict>
</comment>
<sequence length="535" mass="61962">MKKSIVYEIMETKSSMYLSQFRLWLCFIITTLVSLSSSTRWYDDHISLKEIHAEETFHFPKNFLFGTASSAYQYEGAYLTDGKTLSNWDVFTNISGKIADGSHGKVAVDHYHRYPGDLDLMEDLGVNSYRLSLSWARILPKGRFGDVNMGGIDHYNRMINDILKTGIEPFVTLTHYDIPQELEYRYGSWLNPQIREDFEHYANICFRHFGDRVKFWSTFNEPNVQVILGYRTGTYPPSRCSKPFGNCSCGDSYIEPLVAAHNIILSHLAAVNLYRTKFQEQQRGQIGIVMNTIWFEPISDSLADRLAADRAQAFYLTWFLDPVVFGRYPREMREILGDDLPEFTKDDLKSSKNALDFIGINQYTSRYAKDCLHSVCEPGKGGSRAEGFVYANALKDGLRLGEPVGMEEMLMYATERYKNITLYVTENGFGENNTGVLLNDYQRVKFMSNYLDALKRAMRKGADVRGYFAWSLLDNFEWISGYTIRFGMYHVDFSTQERTPRLSASWYKNFIFQHRALSKDDWCLKQKEDTNFFLI</sequence>
<feature type="signal peptide" evidence="5">
    <location>
        <begin position="1"/>
        <end position="38"/>
    </location>
</feature>
<feature type="chain" id="PRO_0000390319" description="Beta-glucosidase 47">
    <location>
        <begin position="39"/>
        <end position="535"/>
    </location>
</feature>
<feature type="active site" description="Proton donor" evidence="3">
    <location>
        <position position="221"/>
    </location>
</feature>
<feature type="active site" description="Nucleophile" evidence="7">
    <location>
        <position position="426"/>
    </location>
</feature>
<feature type="binding site" evidence="3">
    <location>
        <position position="73"/>
    </location>
    <ligand>
        <name>a beta-D-glucoside</name>
        <dbReference type="ChEBI" id="CHEBI:22798"/>
    </ligand>
</feature>
<feature type="binding site" evidence="3">
    <location>
        <position position="175"/>
    </location>
    <ligand>
        <name>a beta-D-glucoside</name>
        <dbReference type="ChEBI" id="CHEBI:22798"/>
    </ligand>
</feature>
<feature type="binding site" evidence="3">
    <location>
        <begin position="220"/>
        <end position="221"/>
    </location>
    <ligand>
        <name>a beta-D-glucoside</name>
        <dbReference type="ChEBI" id="CHEBI:22798"/>
    </ligand>
</feature>
<feature type="binding site" evidence="3">
    <location>
        <position position="363"/>
    </location>
    <ligand>
        <name>a beta-D-glucoside</name>
        <dbReference type="ChEBI" id="CHEBI:22798"/>
    </ligand>
</feature>
<feature type="binding site" evidence="4">
    <location>
        <position position="426"/>
    </location>
    <ligand>
        <name>a beta-D-glucoside</name>
        <dbReference type="ChEBI" id="CHEBI:22798"/>
    </ligand>
</feature>
<feature type="binding site" evidence="3">
    <location>
        <position position="470"/>
    </location>
    <ligand>
        <name>a beta-D-glucoside</name>
        <dbReference type="ChEBI" id="CHEBI:22798"/>
    </ligand>
</feature>
<feature type="binding site" evidence="3">
    <location>
        <begin position="477"/>
        <end position="478"/>
    </location>
    <ligand>
        <name>a beta-D-glucoside</name>
        <dbReference type="ChEBI" id="CHEBI:22798"/>
    </ligand>
</feature>
<feature type="binding site" evidence="2">
    <location>
        <position position="486"/>
    </location>
    <ligand>
        <name>a beta-D-glucoside</name>
        <dbReference type="ChEBI" id="CHEBI:22798"/>
    </ligand>
</feature>
<feature type="glycosylation site" description="N-linked (GlcNAc...) asparagine" evidence="6">
    <location>
        <position position="93"/>
    </location>
</feature>
<feature type="glycosylation site" description="N-linked (GlcNAc...) asparagine" evidence="6">
    <location>
        <position position="246"/>
    </location>
</feature>
<feature type="glycosylation site" description="N-linked (GlcNAc...) asparagine" evidence="6">
    <location>
        <position position="419"/>
    </location>
</feature>
<feature type="glycosylation site" description="N-linked (GlcNAc...) asparagine" evidence="6">
    <location>
        <position position="432"/>
    </location>
</feature>
<feature type="disulfide bond" evidence="3">
    <location>
        <begin position="240"/>
        <end position="247"/>
    </location>
</feature>
<feature type="disulfide bond" evidence="3">
    <location>
        <begin position="371"/>
        <end position="376"/>
    </location>
</feature>
<dbReference type="EC" id="3.2.1.21" evidence="1"/>
<dbReference type="EMBL" id="AL035527">
    <property type="protein sequence ID" value="CAB36820.1"/>
    <property type="status" value="ALT_SEQ"/>
    <property type="molecule type" value="Genomic_DNA"/>
</dbReference>
<dbReference type="EMBL" id="AL161555">
    <property type="protein sequence ID" value="CAB81283.1"/>
    <property type="status" value="ALT_SEQ"/>
    <property type="molecule type" value="Genomic_DNA"/>
</dbReference>
<dbReference type="EMBL" id="CP002687">
    <property type="protein sequence ID" value="AEE84500.1"/>
    <property type="molecule type" value="Genomic_DNA"/>
</dbReference>
<dbReference type="PIR" id="T05851">
    <property type="entry name" value="T05851"/>
</dbReference>
<dbReference type="RefSeq" id="NP_193907.2">
    <property type="nucleotide sequence ID" value="NM_118296.4"/>
</dbReference>
<dbReference type="SMR" id="Q9SVS1"/>
<dbReference type="FunCoup" id="Q9SVS1">
    <property type="interactions" value="196"/>
</dbReference>
<dbReference type="STRING" id="3702.Q9SVS1"/>
<dbReference type="CAZy" id="GH1">
    <property type="family name" value="Glycoside Hydrolase Family 1"/>
</dbReference>
<dbReference type="GlyCosmos" id="Q9SVS1">
    <property type="glycosylation" value="4 sites, No reported glycans"/>
</dbReference>
<dbReference type="GlyGen" id="Q9SVS1">
    <property type="glycosylation" value="4 sites"/>
</dbReference>
<dbReference type="PaxDb" id="3702-AT4G21760.1"/>
<dbReference type="ProteomicsDB" id="240425"/>
<dbReference type="EnsemblPlants" id="AT4G21760.1">
    <property type="protein sequence ID" value="AT4G21760.1"/>
    <property type="gene ID" value="AT4G21760"/>
</dbReference>
<dbReference type="GeneID" id="828264"/>
<dbReference type="Gramene" id="AT4G21760.1">
    <property type="protein sequence ID" value="AT4G21760.1"/>
    <property type="gene ID" value="AT4G21760"/>
</dbReference>
<dbReference type="KEGG" id="ath:AT4G21760"/>
<dbReference type="Araport" id="AT4G21760"/>
<dbReference type="TAIR" id="AT4G21760">
    <property type="gene designation" value="BGLU47"/>
</dbReference>
<dbReference type="eggNOG" id="KOG0626">
    <property type="taxonomic scope" value="Eukaryota"/>
</dbReference>
<dbReference type="HOGENOM" id="CLU_001859_1_0_1"/>
<dbReference type="InParanoid" id="Q9SVS1"/>
<dbReference type="PhylomeDB" id="Q9SVS1"/>
<dbReference type="PRO" id="PR:Q9SVS1"/>
<dbReference type="Proteomes" id="UP000006548">
    <property type="component" value="Chromosome 4"/>
</dbReference>
<dbReference type="ExpressionAtlas" id="Q9SVS1">
    <property type="expression patterns" value="baseline and differential"/>
</dbReference>
<dbReference type="GO" id="GO:0008422">
    <property type="term" value="F:beta-glucosidase activity"/>
    <property type="evidence" value="ECO:0007669"/>
    <property type="project" value="UniProtKB-EC"/>
</dbReference>
<dbReference type="GO" id="GO:0005975">
    <property type="term" value="P:carbohydrate metabolic process"/>
    <property type="evidence" value="ECO:0007669"/>
    <property type="project" value="InterPro"/>
</dbReference>
<dbReference type="FunFam" id="3.20.20.80:FF:000020">
    <property type="entry name" value="Beta-glucosidase 12"/>
    <property type="match status" value="1"/>
</dbReference>
<dbReference type="Gene3D" id="3.20.20.80">
    <property type="entry name" value="Glycosidases"/>
    <property type="match status" value="1"/>
</dbReference>
<dbReference type="InterPro" id="IPR001360">
    <property type="entry name" value="Glyco_hydro_1"/>
</dbReference>
<dbReference type="InterPro" id="IPR018120">
    <property type="entry name" value="Glyco_hydro_1_AS"/>
</dbReference>
<dbReference type="InterPro" id="IPR033132">
    <property type="entry name" value="Glyco_hydro_1_N_CS"/>
</dbReference>
<dbReference type="InterPro" id="IPR017853">
    <property type="entry name" value="Glycoside_hydrolase_SF"/>
</dbReference>
<dbReference type="PANTHER" id="PTHR10353:SF27">
    <property type="entry name" value="BETA-GLUCOSIDASE 47"/>
    <property type="match status" value="1"/>
</dbReference>
<dbReference type="PANTHER" id="PTHR10353">
    <property type="entry name" value="GLYCOSYL HYDROLASE"/>
    <property type="match status" value="1"/>
</dbReference>
<dbReference type="Pfam" id="PF00232">
    <property type="entry name" value="Glyco_hydro_1"/>
    <property type="match status" value="1"/>
</dbReference>
<dbReference type="PRINTS" id="PR00131">
    <property type="entry name" value="GLHYDRLASE1"/>
</dbReference>
<dbReference type="SUPFAM" id="SSF51445">
    <property type="entry name" value="(Trans)glycosidases"/>
    <property type="match status" value="1"/>
</dbReference>
<dbReference type="PROSITE" id="PS00572">
    <property type="entry name" value="GLYCOSYL_HYDROL_F1_1"/>
    <property type="match status" value="1"/>
</dbReference>
<dbReference type="PROSITE" id="PS00653">
    <property type="entry name" value="GLYCOSYL_HYDROL_F1_2"/>
    <property type="match status" value="1"/>
</dbReference>
<evidence type="ECO:0000250" key="1">
    <source>
        <dbReference type="UniProtKB" id="O64879"/>
    </source>
</evidence>
<evidence type="ECO:0000250" key="2">
    <source>
        <dbReference type="UniProtKB" id="Q1XH05"/>
    </source>
</evidence>
<evidence type="ECO:0000250" key="3">
    <source>
        <dbReference type="UniProtKB" id="Q7XSK0"/>
    </source>
</evidence>
<evidence type="ECO:0000250" key="4">
    <source>
        <dbReference type="UniProtKB" id="Q9SPP9"/>
    </source>
</evidence>
<evidence type="ECO:0000255" key="5"/>
<evidence type="ECO:0000255" key="6">
    <source>
        <dbReference type="PROSITE-ProRule" id="PRU00498"/>
    </source>
</evidence>
<evidence type="ECO:0000255" key="7">
    <source>
        <dbReference type="PROSITE-ProRule" id="PRU10055"/>
    </source>
</evidence>
<evidence type="ECO:0000303" key="8">
    <source>
    </source>
</evidence>
<evidence type="ECO:0000305" key="9"/>
<evidence type="ECO:0000312" key="10">
    <source>
        <dbReference type="Araport" id="AT4G21760"/>
    </source>
</evidence>
<evidence type="ECO:0000312" key="11">
    <source>
        <dbReference type="EMBL" id="CAB36820.1"/>
    </source>
</evidence>
<accession>Q9SVS1</accession>
<gene>
    <name evidence="8" type="primary">BGLU47</name>
    <name evidence="10" type="ordered locus">At4g21760</name>
    <name evidence="11" type="ORF">F17L22.220</name>
</gene>
<organism>
    <name type="scientific">Arabidopsis thaliana</name>
    <name type="common">Mouse-ear cress</name>
    <dbReference type="NCBI Taxonomy" id="3702"/>
    <lineage>
        <taxon>Eukaryota</taxon>
        <taxon>Viridiplantae</taxon>
        <taxon>Streptophyta</taxon>
        <taxon>Embryophyta</taxon>
        <taxon>Tracheophyta</taxon>
        <taxon>Spermatophyta</taxon>
        <taxon>Magnoliopsida</taxon>
        <taxon>eudicotyledons</taxon>
        <taxon>Gunneridae</taxon>
        <taxon>Pentapetalae</taxon>
        <taxon>rosids</taxon>
        <taxon>malvids</taxon>
        <taxon>Brassicales</taxon>
        <taxon>Brassicaceae</taxon>
        <taxon>Camelineae</taxon>
        <taxon>Arabidopsis</taxon>
    </lineage>
</organism>